<keyword id="KW-0597">Phosphoprotein</keyword>
<keyword id="KW-1185">Reference proteome</keyword>
<keyword id="KW-0691">RNA editing</keyword>
<keyword id="KW-0693">Viral RNA replication</keyword>
<feature type="chain" id="PRO_0000394717" description="Phosphoprotein">
    <location>
        <begin position="1"/>
        <end position="507"/>
    </location>
</feature>
<feature type="region of interest" description="Interaction with N0" evidence="3">
    <location>
        <begin position="1"/>
        <end position="48"/>
    </location>
</feature>
<feature type="region of interest" description="Disordered" evidence="5">
    <location>
        <begin position="40"/>
        <end position="92"/>
    </location>
</feature>
<feature type="region of interest" description="Disordered" evidence="5">
    <location>
        <begin position="133"/>
        <end position="168"/>
    </location>
</feature>
<feature type="region of interest" description="Disordered" evidence="5">
    <location>
        <begin position="201"/>
        <end position="228"/>
    </location>
</feature>
<feature type="region of interest" description="Disordered" evidence="5">
    <location>
        <begin position="252"/>
        <end position="273"/>
    </location>
</feature>
<feature type="region of interest" description="Multimerization" evidence="3">
    <location>
        <begin position="304"/>
        <end position="376"/>
    </location>
</feature>
<feature type="region of interest" description="Interaction with the L polymerase" evidence="6">
    <location>
        <begin position="361"/>
        <end position="377"/>
    </location>
</feature>
<feature type="region of interest" description="Interaction with the L polymerase" evidence="6">
    <location>
        <begin position="396"/>
        <end position="410"/>
    </location>
</feature>
<feature type="region of interest" description="X domain (XD)" evidence="6">
    <location>
        <begin position="457"/>
        <end position="507"/>
    </location>
</feature>
<feature type="region of interest" description="Interaction with the nucleocapsid (N-RNA)" evidence="3">
    <location>
        <begin position="459"/>
        <end position="507"/>
    </location>
</feature>
<feature type="compositionally biased region" description="Low complexity" evidence="5">
    <location>
        <begin position="133"/>
        <end position="143"/>
    </location>
</feature>
<feature type="compositionally biased region" description="Acidic residues" evidence="5">
    <location>
        <begin position="144"/>
        <end position="160"/>
    </location>
</feature>
<feature type="compositionally biased region" description="Low complexity" evidence="5">
    <location>
        <begin position="260"/>
        <end position="270"/>
    </location>
</feature>
<feature type="modified residue" description="Phosphoserine" evidence="3">
    <location>
        <position position="86"/>
    </location>
</feature>
<feature type="modified residue" description="Phosphoserine" evidence="3">
    <location>
        <position position="151"/>
    </location>
</feature>
<proteinExistence type="evidence at protein level"/>
<organismHost>
    <name type="scientific">Homo sapiens</name>
    <name type="common">Human</name>
    <dbReference type="NCBI Taxonomy" id="9606"/>
</organismHost>
<evidence type="ECO:0000250" key="1"/>
<evidence type="ECO:0000250" key="2">
    <source>
        <dbReference type="UniProtKB" id="P06162"/>
    </source>
</evidence>
<evidence type="ECO:0000250" key="3">
    <source>
        <dbReference type="UniProtKB" id="Q77M42"/>
    </source>
</evidence>
<evidence type="ECO:0000250" key="4">
    <source>
        <dbReference type="UniProtKB" id="Q83623"/>
    </source>
</evidence>
<evidence type="ECO:0000256" key="5">
    <source>
        <dbReference type="SAM" id="MobiDB-lite"/>
    </source>
</evidence>
<evidence type="ECO:0000269" key="6">
    <source>
    </source>
</evidence>
<evidence type="ECO:0000269" key="7">
    <source>
    </source>
</evidence>
<evidence type="ECO:0000269" key="8">
    <source>
    </source>
</evidence>
<evidence type="ECO:0000305" key="9"/>
<evidence type="ECO:0000305" key="10">
    <source>
    </source>
</evidence>
<evidence type="ECO:0000305" key="11">
    <source>
    </source>
</evidence>
<dbReference type="EMBL" id="AB016162">
    <property type="protein sequence ID" value="BAA34978.1"/>
    <property type="molecule type" value="Genomic_RNA"/>
</dbReference>
<dbReference type="BMRB" id="Q9WMB4"/>
<dbReference type="SMR" id="Q9WMB4"/>
<dbReference type="KEGG" id="vg:1489805"/>
<dbReference type="Proteomes" id="UP000008699">
    <property type="component" value="Segment"/>
</dbReference>
<dbReference type="GO" id="GO:0003723">
    <property type="term" value="F:RNA binding"/>
    <property type="evidence" value="ECO:0007669"/>
    <property type="project" value="InterPro"/>
</dbReference>
<dbReference type="GO" id="GO:0003968">
    <property type="term" value="F:RNA-directed RNA polymerase activity"/>
    <property type="evidence" value="ECO:0007669"/>
    <property type="project" value="InterPro"/>
</dbReference>
<dbReference type="GO" id="GO:0006351">
    <property type="term" value="P:DNA-templated transcription"/>
    <property type="evidence" value="ECO:0007669"/>
    <property type="project" value="InterPro"/>
</dbReference>
<dbReference type="GO" id="GO:0019079">
    <property type="term" value="P:viral genome replication"/>
    <property type="evidence" value="ECO:0007669"/>
    <property type="project" value="InterPro"/>
</dbReference>
<dbReference type="CDD" id="cd21031">
    <property type="entry name" value="MEV_P-protein-C_like"/>
    <property type="match status" value="1"/>
</dbReference>
<dbReference type="Gene3D" id="1.20.5.110">
    <property type="match status" value="1"/>
</dbReference>
<dbReference type="Gene3D" id="1.10.8.10">
    <property type="entry name" value="DNA helicase RuvA subunit, C-terminal domain"/>
    <property type="match status" value="1"/>
</dbReference>
<dbReference type="InterPro" id="IPR004897">
    <property type="entry name" value="P/V_Pprotein_paramyxoviral"/>
</dbReference>
<dbReference type="InterPro" id="IPR028243">
    <property type="entry name" value="Paramyxo_P/V_N"/>
</dbReference>
<dbReference type="InterPro" id="IPR016075">
    <property type="entry name" value="RNA_pol_Pprot-P_XD_paramyxovir"/>
</dbReference>
<dbReference type="Pfam" id="PF03210">
    <property type="entry name" value="Paramyx_P_V_C"/>
    <property type="match status" value="1"/>
</dbReference>
<dbReference type="Pfam" id="PF13825">
    <property type="entry name" value="Paramyxo_P_V_N"/>
    <property type="match status" value="1"/>
</dbReference>
<dbReference type="SUPFAM" id="SSF101089">
    <property type="entry name" value="Phosphoprotein XD domain"/>
    <property type="match status" value="1"/>
</dbReference>
<organism>
    <name type="scientific">Measles virus (strain Ichinose-B95a)</name>
    <name type="common">MeV</name>
    <name type="synonym">Subacute sclerose panencephalitis virus</name>
    <dbReference type="NCBI Taxonomy" id="645098"/>
    <lineage>
        <taxon>Viruses</taxon>
        <taxon>Riboviria</taxon>
        <taxon>Orthornavirae</taxon>
        <taxon>Negarnaviricota</taxon>
        <taxon>Haploviricotina</taxon>
        <taxon>Monjiviricetes</taxon>
        <taxon>Mononegavirales</taxon>
        <taxon>Paramyxoviridae</taxon>
        <taxon>Orthoparamyxovirinae</taxon>
        <taxon>Morbillivirus</taxon>
        <taxon>Morbillivirus hominis</taxon>
        <taxon>Measles morbillivirus</taxon>
    </lineage>
</organism>
<comment type="function">
    <text evidence="2 3 8">Essential cofactor of the RNA polymerase L that plays a central role in the transcription and replication by forming the polymerase complex with RNA polymerase L and recruiting L to the genomic N-RNA template for RNA synthesis (By similarity). Also plays a central role in the encapsidation of nascent RNA chains by forming the encapsidation complex with the nucleocapsid protein N (N-P complex). Acts as a chaperone for newly synthesized free N protein, so-called N0, allowing encapsidation of nascent RNA chains during replication (By similarity). The nucleoprotein protein N prevents excessive phosphorylation of P, which leads to down-regulation of viral transcription/ replication (By similarity). Participates, together with N, in the formation of viral factories (viroplasms), which are large inclusions in the host cytoplasm where replication takes place (PubMed:32270045).</text>
</comment>
<comment type="subunit">
    <text evidence="3 4 6 7 11">Homotetramer (By similarity). Interacts (via multimerization domain and XD domain) with polymerase L; this interaction forms the polymerase L-P complex (PubMed:31381607). Interacts (via N-terminus) with N0 (via Ncore); this interaction allows P to chaperon N0 to avoid N polymerization and non-specific RNA binding before encapsidation (By similarity). Interacts (via C-terminus) with N-RNA template (via Ntail); this interaction maintains the P/L complex anchored to the nucleocapsid template during the sequential transcription (Probable). Interacts (via C-terminus) with protein C this interaction allows C to associate with the ribonucleocapsid (PubMed:31748390).</text>
</comment>
<comment type="domain">
    <text evidence="4 6 10">The N-terminus consists of a long intrinsically disordered tail. The central part contains the coiled-coil multimerization domain (MD or OD) (Probable). Forms a four-stranded coiled coil structure (By similarity). The C-terminus constitutes the alpha-helical X domain (XD) that binds to the nucleocapsid (N-RNA complex) and the L polymerase (PubMed:31381607).</text>
</comment>
<comment type="PTM">
    <text evidence="3">Phosphorylation on serines by host CK2 is necessary for the formation of viral factories.</text>
</comment>
<comment type="RNA editing">
    <location>
        <position position="231" evidence="1"/>
    </location>
    <text evidence="1">Partially edited. RNA editing at this position consists of an insertion of one guanine nucleotide. The sequence displayed here is the P protein, derived from the unedited RNA. The edited RNA gives rise to the V protein (AC P0C774) (By similarity).</text>
</comment>
<comment type="similarity">
    <text evidence="9">Belongs to the morbillivirus P protein family.</text>
</comment>
<name>PHOSP_MEASC</name>
<reference key="1">
    <citation type="journal article" date="2000" name="Virus Genes">
        <title>Comparative nucleotide sequence analyses of the entire genomes of B95a cell-isolated and vero cell-isolated measles viruses from the same patient.</title>
        <authorList>
            <person name="Takeuchi K."/>
            <person name="Miyajima N."/>
            <person name="Kobune F."/>
            <person name="Tashiro M."/>
        </authorList>
    </citation>
    <scope>NUCLEOTIDE SEQUENCE [GENOMIC RNA]</scope>
</reference>
<reference key="2">
    <citation type="journal article" date="2019" name="PLoS Pathog.">
        <title>Bipartite interface of the measles virus phosphoprotein X domain with the large polymerase protein regulates viral polymerase dynamics.</title>
        <authorList>
            <person name="Du Pont V."/>
            <person name="Jiang Y."/>
            <person name="Plemper R.K."/>
        </authorList>
    </citation>
    <scope>INTERACTION WITH THE L POLYMERASE</scope>
    <scope>DOMAIN</scope>
</reference>
<reference key="3">
    <citation type="journal article" date="2020" name="Sci. Adv.">
        <title>Measles virus nucleo- and phosphoproteins form liquid-like phase-separated compartments that promote nucleocapsid assembly.</title>
        <authorList>
            <person name="Guseva S."/>
            <person name="Milles S."/>
            <person name="Jensen M.R."/>
            <person name="Salvi N."/>
            <person name="Kleman J.P."/>
            <person name="Maurin D."/>
            <person name="Ruigrok R.W.H."/>
            <person name="Blackledge M."/>
        </authorList>
    </citation>
    <scope>INTERACTION WITH THE NUCLEOPROTEIN</scope>
    <scope>FUNCTION</scope>
</reference>
<reference key="4">
    <citation type="journal article" date="2019" name="Front. Microbiol.">
        <title>The Nucleoprotein and Phosphoprotein of Measles Virus.</title>
        <authorList>
            <person name="Guseva S."/>
            <person name="Milles S."/>
            <person name="Blackledge M."/>
            <person name="Ruigrok R.W.H."/>
        </authorList>
    </citation>
    <scope>REVIEW</scope>
    <scope>DOMAIN</scope>
</reference>
<reference key="5">
    <citation type="journal article" date="2020" name="J. Virol.">
        <title>The C Protein Is Recruited to Measles Virus Ribonucleocapsids by the Phosphoprotein.</title>
        <authorList>
            <person name="Pfaller C.K."/>
            <person name="Bloyet L.M."/>
            <person name="Donohue R.C."/>
            <person name="Huff A.L."/>
            <person name="Bartemes W.P."/>
            <person name="Yousaf I."/>
            <person name="Urzua E."/>
            <person name="Claviere M."/>
            <person name="Zachary M."/>
            <person name="de Masson d'Autume V."/>
            <person name="Carson S."/>
            <person name="Schieferecke A.J."/>
            <person name="Meyer A.J."/>
            <person name="Gerlier D."/>
            <person name="Cattaneo R."/>
        </authorList>
    </citation>
    <scope>INTERACTION WITH PROTEIN C</scope>
    <source>
        <strain>Vac2-2tags</strain>
    </source>
</reference>
<accession>Q9WMB4</accession>
<gene>
    <name type="primary">P/V</name>
</gene>
<protein>
    <recommendedName>
        <fullName>Phosphoprotein</fullName>
        <shortName>Protein P</shortName>
    </recommendedName>
</protein>
<sequence>MAEEQARHVKNGLECIRALKAEPIGSLAVEEAMAAWSEISDNPGQDRATCKEEEAGSSGLSKPCLSAIGSTEGGAPRIRGQGSGESDDDAETLGIPSRNLQASSTGLQCYHVYDHSGEAVKGIQDADSIMVQSGLDGDSTLSGGDDESENSDVDIGEPDTEGYAITDRGSAPISMGFRASDVETAEGGEIHELLKLQSRGNNFPKLGKTLNVPPPPNPSRASTSETPIKKGTDARLASFGTEIASLLTGGATQCARKSPSEPSGPGAPAGNVPECVSNAALIQEWTPESGTTISPRSQNNEEGGDYYDDELFSDVQDIKTALAKIHEDNQKIISKLESLLLLKGEVESIKKQINRQNISISTLEGHLSSIMIAIPGLGKDPNDPTADVELNPDLKPIIGRDSGRALAEVLKKPVASRQLQGMTNGRTSSRGQLLKEFQLKPIGKKVSSAVGFVPDTGPASRSVIRSIIKSSRLEEDRKRYLMTLLDDIKGANDLAKFHQMLMKIIMK</sequence>